<proteinExistence type="evidence at protein level"/>
<name>RBBP4_BOVIN</name>
<reference key="1">
    <citation type="journal article" date="2005" name="BMC Genomics">
        <title>Characterization of 954 bovine full-CDS cDNA sequences.</title>
        <authorList>
            <person name="Harhay G.P."/>
            <person name="Sonstegard T.S."/>
            <person name="Keele J.W."/>
            <person name="Heaton M.P."/>
            <person name="Clawson M.L."/>
            <person name="Snelling W.M."/>
            <person name="Wiedmann R.T."/>
            <person name="Van Tassell C.P."/>
            <person name="Smith T.P.L."/>
        </authorList>
    </citation>
    <scope>NUCLEOTIDE SEQUENCE [LARGE SCALE MRNA]</scope>
</reference>
<reference key="2">
    <citation type="submission" date="2005-09" db="EMBL/GenBank/DDBJ databases">
        <authorList>
            <consortium name="NIH - Mammalian Gene Collection (MGC) project"/>
        </authorList>
    </citation>
    <scope>NUCLEOTIDE SEQUENCE [LARGE SCALE MRNA]</scope>
    <source>
        <strain>Crossbred X Angus</strain>
        <tissue>Ileum</tissue>
    </source>
</reference>
<reference key="3">
    <citation type="journal article" date="1996" name="Science">
        <title>A mammalian histone deacetylase related to the yeast transcriptional regulator Rpd3p.</title>
        <authorList>
            <person name="Taunton J."/>
            <person name="Hassig C.A."/>
            <person name="Schreiber S.L."/>
        </authorList>
    </citation>
    <scope>IDENTIFICATION BY MASS SPECTROMETRY</scope>
    <scope>INTERACTION WITH HDAC1</scope>
    <scope>SUBCELLULAR LOCATION</scope>
</reference>
<organism>
    <name type="scientific">Bos taurus</name>
    <name type="common">Bovine</name>
    <dbReference type="NCBI Taxonomy" id="9913"/>
    <lineage>
        <taxon>Eukaryota</taxon>
        <taxon>Metazoa</taxon>
        <taxon>Chordata</taxon>
        <taxon>Craniata</taxon>
        <taxon>Vertebrata</taxon>
        <taxon>Euteleostomi</taxon>
        <taxon>Mammalia</taxon>
        <taxon>Eutheria</taxon>
        <taxon>Laurasiatheria</taxon>
        <taxon>Artiodactyla</taxon>
        <taxon>Ruminantia</taxon>
        <taxon>Pecora</taxon>
        <taxon>Bovidae</taxon>
        <taxon>Bovinae</taxon>
        <taxon>Bos</taxon>
    </lineage>
</organism>
<evidence type="ECO:0000250" key="1">
    <source>
        <dbReference type="UniProtKB" id="Q09028"/>
    </source>
</evidence>
<evidence type="ECO:0000250" key="2">
    <source>
        <dbReference type="UniProtKB" id="Q60972"/>
    </source>
</evidence>
<evidence type="ECO:0000269" key="3">
    <source>
    </source>
</evidence>
<evidence type="ECO:0000305" key="4"/>
<accession>Q3MHL3</accession>
<accession>A5D9B1</accession>
<protein>
    <recommendedName>
        <fullName>Histone-binding protein RBBP4</fullName>
    </recommendedName>
    <alternativeName>
        <fullName evidence="4">Chromatin assembly factor 1 subunit C</fullName>
        <shortName evidence="4">CAF-1 subunit C</shortName>
    </alternativeName>
    <alternativeName>
        <fullName>Nucleosome-remodeling factor subunit RBAP48</fullName>
    </alternativeName>
    <alternativeName>
        <fullName evidence="1">Retinoblastoma-binding protein 4</fullName>
        <shortName>RBBP-4</shortName>
    </alternativeName>
</protein>
<dbReference type="EMBL" id="BT030530">
    <property type="protein sequence ID" value="ABQ12970.1"/>
    <property type="molecule type" value="mRNA"/>
</dbReference>
<dbReference type="EMBL" id="BC105195">
    <property type="protein sequence ID" value="AAI05196.1"/>
    <property type="molecule type" value="mRNA"/>
</dbReference>
<dbReference type="RefSeq" id="NP_001070481.1">
    <property type="nucleotide sequence ID" value="NM_001077013.2"/>
</dbReference>
<dbReference type="SMR" id="Q3MHL3"/>
<dbReference type="FunCoup" id="Q3MHL3">
    <property type="interactions" value="5334"/>
</dbReference>
<dbReference type="IntAct" id="Q3MHL3">
    <property type="interactions" value="1"/>
</dbReference>
<dbReference type="MINT" id="Q3MHL3"/>
<dbReference type="STRING" id="9913.ENSBTAP00000007758"/>
<dbReference type="PaxDb" id="9913-ENSBTAP00000007758"/>
<dbReference type="PeptideAtlas" id="Q3MHL3"/>
<dbReference type="GeneID" id="767940"/>
<dbReference type="KEGG" id="bta:767940"/>
<dbReference type="CTD" id="5928"/>
<dbReference type="VEuPathDB" id="HostDB:ENSBTAG00000005904"/>
<dbReference type="eggNOG" id="KOG0264">
    <property type="taxonomic scope" value="Eukaryota"/>
</dbReference>
<dbReference type="HOGENOM" id="CLU_020445_3_1_1"/>
<dbReference type="InParanoid" id="Q3MHL3"/>
<dbReference type="OMA" id="PHEEGCL"/>
<dbReference type="OrthoDB" id="427795at2759"/>
<dbReference type="TreeFam" id="TF106485"/>
<dbReference type="Reactome" id="R-BTA-1538133">
    <property type="pathway name" value="G0 and Early G1"/>
</dbReference>
<dbReference type="Reactome" id="R-BTA-212300">
    <property type="pathway name" value="PRC2 methylates histones and DNA"/>
</dbReference>
<dbReference type="Reactome" id="R-BTA-2559580">
    <property type="pathway name" value="Oxidative Stress Induced Senescence"/>
</dbReference>
<dbReference type="Reactome" id="R-BTA-3214815">
    <property type="pathway name" value="HDACs deacetylate histones"/>
</dbReference>
<dbReference type="Reactome" id="R-BTA-3214841">
    <property type="pathway name" value="PKMTs methylate histone lysines"/>
</dbReference>
<dbReference type="Reactome" id="R-BTA-606279">
    <property type="pathway name" value="Deposition of new CENPA-containing nucleosomes at the centromere"/>
</dbReference>
<dbReference type="Reactome" id="R-BTA-6804758">
    <property type="pathway name" value="Regulation of TP53 Activity through Acetylation"/>
</dbReference>
<dbReference type="Reactome" id="R-BTA-73762">
    <property type="pathway name" value="RNA Polymerase I Transcription Initiation"/>
</dbReference>
<dbReference type="Reactome" id="R-BTA-8943724">
    <property type="pathway name" value="Regulation of PTEN gene transcription"/>
</dbReference>
<dbReference type="Reactome" id="R-BTA-8953750">
    <property type="pathway name" value="Transcriptional Regulation by E2F6"/>
</dbReference>
<dbReference type="Proteomes" id="UP000009136">
    <property type="component" value="Chromosome 2"/>
</dbReference>
<dbReference type="Bgee" id="ENSBTAG00000005904">
    <property type="expression patterns" value="Expressed in spermatocyte and 105 other cell types or tissues"/>
</dbReference>
<dbReference type="GO" id="GO:0033186">
    <property type="term" value="C:CAF-1 complex"/>
    <property type="evidence" value="ECO:0000250"/>
    <property type="project" value="UniProtKB"/>
</dbReference>
<dbReference type="GO" id="GO:0000781">
    <property type="term" value="C:chromosome, telomeric region"/>
    <property type="evidence" value="ECO:0007669"/>
    <property type="project" value="UniProtKB-SubCell"/>
</dbReference>
<dbReference type="GO" id="GO:0035098">
    <property type="term" value="C:ESC/E(Z) complex"/>
    <property type="evidence" value="ECO:0000250"/>
    <property type="project" value="UniProtKB"/>
</dbReference>
<dbReference type="GO" id="GO:0005634">
    <property type="term" value="C:nucleus"/>
    <property type="evidence" value="ECO:0000250"/>
    <property type="project" value="UniProtKB"/>
</dbReference>
<dbReference type="GO" id="GO:0016581">
    <property type="term" value="C:NuRD complex"/>
    <property type="evidence" value="ECO:0000250"/>
    <property type="project" value="UniProtKB"/>
</dbReference>
<dbReference type="GO" id="GO:0042393">
    <property type="term" value="F:histone binding"/>
    <property type="evidence" value="ECO:0000318"/>
    <property type="project" value="GO_Central"/>
</dbReference>
<dbReference type="GO" id="GO:0006338">
    <property type="term" value="P:chromatin remodeling"/>
    <property type="evidence" value="ECO:0000318"/>
    <property type="project" value="GO_Central"/>
</dbReference>
<dbReference type="GO" id="GO:0006281">
    <property type="term" value="P:DNA repair"/>
    <property type="evidence" value="ECO:0007669"/>
    <property type="project" value="UniProtKB-KW"/>
</dbReference>
<dbReference type="GO" id="GO:0006260">
    <property type="term" value="P:DNA replication"/>
    <property type="evidence" value="ECO:0007669"/>
    <property type="project" value="UniProtKB-KW"/>
</dbReference>
<dbReference type="GO" id="GO:0006335">
    <property type="term" value="P:DNA replication-dependent chromatin assembly"/>
    <property type="evidence" value="ECO:0000250"/>
    <property type="project" value="UniProtKB"/>
</dbReference>
<dbReference type="GO" id="GO:0006355">
    <property type="term" value="P:regulation of DNA-templated transcription"/>
    <property type="evidence" value="ECO:0000318"/>
    <property type="project" value="GO_Central"/>
</dbReference>
<dbReference type="FunFam" id="2.130.10.10:FF:000021">
    <property type="entry name" value="histone-binding protein RBBP4 isoform X1"/>
    <property type="match status" value="1"/>
</dbReference>
<dbReference type="Gene3D" id="2.130.10.10">
    <property type="entry name" value="YVTN repeat-like/Quinoprotein amine dehydrogenase"/>
    <property type="match status" value="1"/>
</dbReference>
<dbReference type="InterPro" id="IPR020472">
    <property type="entry name" value="G-protein_beta_WD-40_rep"/>
</dbReference>
<dbReference type="InterPro" id="IPR022052">
    <property type="entry name" value="Histone-bd_RBBP4-like_N"/>
</dbReference>
<dbReference type="InterPro" id="IPR015943">
    <property type="entry name" value="WD40/YVTN_repeat-like_dom_sf"/>
</dbReference>
<dbReference type="InterPro" id="IPR019775">
    <property type="entry name" value="WD40_repeat_CS"/>
</dbReference>
<dbReference type="InterPro" id="IPR036322">
    <property type="entry name" value="WD40_repeat_dom_sf"/>
</dbReference>
<dbReference type="InterPro" id="IPR001680">
    <property type="entry name" value="WD40_rpt"/>
</dbReference>
<dbReference type="InterPro" id="IPR050459">
    <property type="entry name" value="WD_repeat_RBAP46/RBAP48/MSI1"/>
</dbReference>
<dbReference type="PANTHER" id="PTHR22850">
    <property type="entry name" value="WD40 REPEAT FAMILY"/>
    <property type="match status" value="1"/>
</dbReference>
<dbReference type="Pfam" id="PF12265">
    <property type="entry name" value="CAF1C_H4-bd"/>
    <property type="match status" value="1"/>
</dbReference>
<dbReference type="Pfam" id="PF00400">
    <property type="entry name" value="WD40"/>
    <property type="match status" value="5"/>
</dbReference>
<dbReference type="PRINTS" id="PR00320">
    <property type="entry name" value="GPROTEINBRPT"/>
</dbReference>
<dbReference type="SMART" id="SM00320">
    <property type="entry name" value="WD40"/>
    <property type="match status" value="6"/>
</dbReference>
<dbReference type="SUPFAM" id="SSF50978">
    <property type="entry name" value="WD40 repeat-like"/>
    <property type="match status" value="1"/>
</dbReference>
<dbReference type="PROSITE" id="PS00678">
    <property type="entry name" value="WD_REPEATS_1"/>
    <property type="match status" value="3"/>
</dbReference>
<dbReference type="PROSITE" id="PS50082">
    <property type="entry name" value="WD_REPEATS_2"/>
    <property type="match status" value="5"/>
</dbReference>
<dbReference type="PROSITE" id="PS50294">
    <property type="entry name" value="WD_REPEATS_REGION"/>
    <property type="match status" value="1"/>
</dbReference>
<keyword id="KW-0007">Acetylation</keyword>
<keyword id="KW-0131">Cell cycle</keyword>
<keyword id="KW-0143">Chaperone</keyword>
<keyword id="KW-0156">Chromatin regulator</keyword>
<keyword id="KW-0158">Chromosome</keyword>
<keyword id="KW-0227">DNA damage</keyword>
<keyword id="KW-0234">DNA repair</keyword>
<keyword id="KW-0235">DNA replication</keyword>
<keyword id="KW-1017">Isopeptide bond</keyword>
<keyword id="KW-0539">Nucleus</keyword>
<keyword id="KW-0597">Phosphoprotein</keyword>
<keyword id="KW-1185">Reference proteome</keyword>
<keyword id="KW-0677">Repeat</keyword>
<keyword id="KW-0678">Repressor</keyword>
<keyword id="KW-0779">Telomere</keyword>
<keyword id="KW-0804">Transcription</keyword>
<keyword id="KW-0805">Transcription regulation</keyword>
<keyword id="KW-0832">Ubl conjugation</keyword>
<keyword id="KW-0853">WD repeat</keyword>
<sequence>MADKEAAFDDAVEERVINEEYKIWKKNTPFLYDLVMTHALEWPSLTAQWLPDVTRPEGKDFSIHRLVLGTHTSDEQNHLVIASVQLPNDDAQFDASHYDSEKGEFGGFGSVSGKIEIEIKINHEGEVNRARYMPQNPCIIATKTPSSDVLVFDYTKHPSKPDPSGECNPDLRLRGHQKEGYGLSWNPNLSGHLLSASDDHTICLWDISAVPKEGKVVDAKTIFTGHTAVVEDVSWHLLHESLFGSVADDQKLMIWDTRSNNTSKPSHSVDAHTAEVNCLSFNPYSEFILATGSADKTVALWDLRNLKLKLHSFESHKDEIFQVQWSPHNETILASSGTDRRLNVWDLSKIGEEQSPEDAEDGPPELLFIHGGHTAKISDFSWNPNEPWVICSVSEDNIMQVWQMAENIYNDEDPEGSVDPEGQGS</sequence>
<comment type="function">
    <text evidence="1">Core histone-binding subunit that may target chromatin assembly factors, chromatin remodeling factors and histone deacetylases to their histone substrates in a manner that is regulated by nucleosomal DNA (By similarity). Component of the chromatin assembly factor 1 (CAF-1) complex, which is required for chromatin assembly following DNA replication and DNA repair (By similarity). Component of the core histone deacetylase (HDAC) complex, which promotes histone deacetylation and consequent transcriptional repression (By similarity). Component of the nucleosome remodeling and histone deacetylase complex (the NuRD complex), which promotes transcriptional repression by histone deacetylation and nucleosome remodeling (By similarity). Component of the PRC2 complex, which promotes repression of homeotic genes during development (By similarity). Component of the NURF (nucleosome remodeling factor) complex (By similarity).</text>
</comment>
<comment type="subunit">
    <text evidence="1 2">Binds directly to helix 1 of the histone fold of histone H4, a region that is not accessible when H4 is in chromatin (By similarity). Subunit of the chromatin assembly factor 1 (CAF-1) complex, which is composed of RBBP4, CHAF1B and CHAF1A (By similarity). Subunit of the core histone deacetylase (HDAC) complex, which is composed of HDAC1, HDAC2, RBBP4 and RBBP7 (By similarity). The core HDAC complex associates with SIN3A, ARID4B/SAP180, SAP18, SAP30, SAP130, SUDS3/SAP45 and possibly ARID4A/RBP1 and ING1 to form the SIN3 HDAC complex (By similarity). Component of the nucleosome remodeling and deacetylase (NuRD) repressor complex, composed of core proteins MTA1, MTA2, MTA3, RBBP4, RBBP7, HDAC1, HDAC2, MBD2, MBD3, and peripherally associated proteins CDK2AP1, CDK2AP2, GATAD2A, GATAD2B, CHD3, CHD4 and CHD5 (By similarity). The exact stoichiometry of the NuRD complex is unknown, and some subunits such as MBD2 and MBD3, GATAD2A and GATAD2B, and CHD3, CHD4 and CHD5 define mutually exclusive NuRD complexes (By similarity). Interacts with ZNF512B; the interaction is direct and may play a role in repressing gene expression (By similarity). The NuRD complex may also interact with MBD3L1 and MBD3L2 (By similarity). Component of the PRC2 complex, which consists of the core subunits EED, EZH1 or EZH2, SUZ12, and RBBP4, and various combinations of accessory subunits including AEBP2, JARID2, PHF19, MTF2 and EPOP (By similarity). Forms a monomeric PRC2.2 (class 2) complex consisting of at least SUZ12, RBBP4, AEBP2 and JARID2 (By similarity). Forms a dimeric PRC2.1 (class 1, PRC-PCL) complex consisting of at least SUZ12, RBBP4, and PHF19; PHF19 stabilizes the dimeric structure which enhances PRC2 interaction with chromatin (By similarity). Component of the NURF-1 ISWI chromatin remodeling complex (also called the nucleosome-remodeling factor (NURF) complex) at least composed of SMARCA1 (isoform 2), BPTF, RBBP4 and RBBP7 (By similarity). Within the complex interacts with isoform 2 of SMARCA1 (By similarity). Component of the BPFT-SMARCA1 complex at least composed of SMARCA1 (isoform 1), BPFT, RBBP4 and RBBP7; the complex is catalytically inactive and does not remodel chromatin (By similarity). Within the complex interacts with isoform 1 of SMARCA1 (By similarity). Interacts with the ISWI chromatin remodeling complex component SMARCA5; the interaction is direct (By similarity). Interacts with the viral protein-binding domain of the retinoblastoma protein (RB1) (By similarity). Component of the DREAM complex (also named LINC complex) at least composed of E2F4, E2F5, LIN9, LIN37, LIN52, LIN54, MYBL1, MYBL2, RBL1, RBL2, RBBP4, TFDP1 and TFDP2 (By similarity). The complex exists in quiescent cells where it represses cell cycle-dependent genes (By similarity). It dissociates in S phase when LIN9, LIN37, LIN52 and LIN54 form a subcomplex that binds to MYBL2 (By similarity). Found in a complex composed of at least SINHCAF, SIN3A, HDAC1, SAP30, RBBP4, OGT and TET1 (By similarity). Interacts with ZNF827; the interaction is direct and recruits RBBP4 to telomeres (By similarity). Interacts with MTA1; the interaction is direct and mutually exclusive with binding histone H4 (By similarity). Interacts with ARMC12 (via ARM domains) (By similarity). Interacts with BRCA1 (By similarity). Interacts with CDK2AP1 (By similarity). Interacts with CREBBP, and this interaction may be enhanced by the binding of phosphorylated CREB1 to CREBBP (By similarity). Interacts with ERCC6 (By similarity). Interacts with HDAC7 (By similarity). Interacts with PHF6 (By similarity). Interacts with PWWP2B (By similarity). Interacts with SPEN/MINT (By similarity). Interacts with SUV39H1 (By similarity).</text>
</comment>
<comment type="subcellular location">
    <subcellularLocation>
        <location evidence="3">Nucleus</location>
    </subcellularLocation>
    <subcellularLocation>
        <location evidence="1">Chromosome</location>
        <location evidence="1">Telomere</location>
    </subcellularLocation>
    <text evidence="1">Localizes to chromatin as part of the PRC2 complex.</text>
</comment>
<comment type="similarity">
    <text evidence="4">Belongs to the WD repeat RBAP46/RBAP48/MSI1 family.</text>
</comment>
<gene>
    <name type="primary">RBBP4</name>
</gene>
<feature type="initiator methionine" description="Removed" evidence="1">
    <location>
        <position position="1"/>
    </location>
</feature>
<feature type="chain" id="PRO_0000051185" description="Histone-binding protein RBBP4">
    <location>
        <begin position="2"/>
        <end position="425"/>
    </location>
</feature>
<feature type="repeat" description="WD 1" evidence="1">
    <location>
        <begin position="32"/>
        <end position="125"/>
    </location>
</feature>
<feature type="repeat" description="WD 2" evidence="1">
    <location>
        <begin position="126"/>
        <end position="175"/>
    </location>
</feature>
<feature type="repeat" description="WD 3" evidence="1">
    <location>
        <begin position="176"/>
        <end position="223"/>
    </location>
</feature>
<feature type="repeat" description="WD 4" evidence="1">
    <location>
        <begin position="225"/>
        <end position="270"/>
    </location>
</feature>
<feature type="repeat" description="WD 5" evidence="1">
    <location>
        <begin position="271"/>
        <end position="314"/>
    </location>
</feature>
<feature type="repeat" description="WD 6" evidence="1">
    <location>
        <begin position="315"/>
        <end position="371"/>
    </location>
</feature>
<feature type="repeat" description="WD 7" evidence="1">
    <location>
        <begin position="372"/>
        <end position="404"/>
    </location>
</feature>
<feature type="modified residue" description="N-acetylalanine" evidence="1">
    <location>
        <position position="2"/>
    </location>
</feature>
<feature type="modified residue" description="N6-acetyllysine; alternate" evidence="1">
    <location>
        <position position="4"/>
    </location>
</feature>
<feature type="modified residue" description="Phosphoserine" evidence="1">
    <location>
        <position position="110"/>
    </location>
</feature>
<feature type="modified residue" description="N6-acetyllysine; alternate" evidence="2">
    <location>
        <position position="160"/>
    </location>
</feature>
<feature type="modified residue" description="Phosphoserine" evidence="1">
    <location>
        <position position="355"/>
    </location>
</feature>
<feature type="cross-link" description="Glycyl lysine isopeptide (Lys-Gly) (interchain with G-Cter in SUMO2); alternate" evidence="1">
    <location>
        <position position="4"/>
    </location>
</feature>
<feature type="cross-link" description="Glycyl lysine isopeptide (Lys-Gly) (interchain with G-Cter in ubiquitin); alternate" evidence="1">
    <location>
        <position position="4"/>
    </location>
</feature>
<feature type="cross-link" description="Glycyl lysine isopeptide (Lys-Gly) (interchain with G-Cter in SUMO2); alternate" evidence="1">
    <location>
        <position position="160"/>
    </location>
</feature>